<geneLocation type="chloroplast"/>
<gene>
    <name evidence="1" type="primary">atpF</name>
</gene>
<reference key="1">
    <citation type="journal article" date="2008" name="Nucleic Acids Res.">
        <title>The complete nucleotide sequences of the five genetically distinct plastid genomes of Oenothera, subsection Oenothera: I. Sequence evaluation and plastome evolution.</title>
        <authorList>
            <person name="Greiner S."/>
            <person name="Wang X."/>
            <person name="Rauwolf U."/>
            <person name="Silber M.V."/>
            <person name="Mayer K."/>
            <person name="Meurer J."/>
            <person name="Haberer G."/>
            <person name="Herrmann R.G."/>
        </authorList>
    </citation>
    <scope>NUCLEOTIDE SEQUENCE [LARGE SCALE GENOMIC DNA]</scope>
    <source>
        <strain>cv. Suaveolens Grado</strain>
    </source>
</reference>
<dbReference type="EMBL" id="EU262889">
    <property type="protein sequence ID" value="ABW98877.1"/>
    <property type="molecule type" value="Genomic_DNA"/>
</dbReference>
<dbReference type="RefSeq" id="YP_001687372.1">
    <property type="nucleotide sequence ID" value="NC_010361.1"/>
</dbReference>
<dbReference type="SMR" id="B0Z4W5"/>
<dbReference type="GeneID" id="5952047"/>
<dbReference type="GO" id="GO:0009535">
    <property type="term" value="C:chloroplast thylakoid membrane"/>
    <property type="evidence" value="ECO:0007669"/>
    <property type="project" value="UniProtKB-SubCell"/>
</dbReference>
<dbReference type="GO" id="GO:0045259">
    <property type="term" value="C:proton-transporting ATP synthase complex"/>
    <property type="evidence" value="ECO:0007669"/>
    <property type="project" value="UniProtKB-KW"/>
</dbReference>
<dbReference type="GO" id="GO:0046933">
    <property type="term" value="F:proton-transporting ATP synthase activity, rotational mechanism"/>
    <property type="evidence" value="ECO:0007669"/>
    <property type="project" value="UniProtKB-UniRule"/>
</dbReference>
<dbReference type="CDD" id="cd06503">
    <property type="entry name" value="ATP-synt_Fo_b"/>
    <property type="match status" value="1"/>
</dbReference>
<dbReference type="HAMAP" id="MF_01398">
    <property type="entry name" value="ATP_synth_b_bprime"/>
    <property type="match status" value="1"/>
</dbReference>
<dbReference type="InterPro" id="IPR002146">
    <property type="entry name" value="ATP_synth_b/b'su_bac/chlpt"/>
</dbReference>
<dbReference type="PANTHER" id="PTHR34264">
    <property type="entry name" value="ATP SYNTHASE SUBUNIT B, CHLOROPLASTIC"/>
    <property type="match status" value="1"/>
</dbReference>
<dbReference type="PANTHER" id="PTHR34264:SF3">
    <property type="entry name" value="ATP SYNTHASE SUBUNIT B, CHLOROPLASTIC"/>
    <property type="match status" value="1"/>
</dbReference>
<dbReference type="Pfam" id="PF00430">
    <property type="entry name" value="ATP-synt_B"/>
    <property type="match status" value="1"/>
</dbReference>
<comment type="function">
    <text evidence="1">F(1)F(0) ATP synthase produces ATP from ADP in the presence of a proton or sodium gradient. F-type ATPases consist of two structural domains, F(1) containing the extramembraneous catalytic core and F(0) containing the membrane proton channel, linked together by a central stalk and a peripheral stalk. During catalysis, ATP synthesis in the catalytic domain of F(1) is coupled via a rotary mechanism of the central stalk subunits to proton translocation.</text>
</comment>
<comment type="function">
    <text evidence="1">Component of the F(0) channel, it forms part of the peripheral stalk, linking F(1) to F(0).</text>
</comment>
<comment type="subunit">
    <text evidence="1">F-type ATPases have 2 components, F(1) - the catalytic core - and F(0) - the membrane proton channel. F(1) has five subunits: alpha(3), beta(3), gamma(1), delta(1), epsilon(1). F(0) has four main subunits: a(1), b(1), b'(1) and c(10-14). The alpha and beta chains form an alternating ring which encloses part of the gamma chain. F(1) is attached to F(0) by a central stalk formed by the gamma and epsilon chains, while a peripheral stalk is formed by the delta, b and b' chains.</text>
</comment>
<comment type="subcellular location">
    <subcellularLocation>
        <location evidence="1">Plastid</location>
        <location evidence="1">Chloroplast thylakoid membrane</location>
        <topology evidence="1">Single-pass membrane protein</topology>
    </subcellularLocation>
</comment>
<comment type="miscellaneous">
    <text>In plastids the F-type ATPase is also known as CF(1)CF(0).</text>
</comment>
<comment type="similarity">
    <text evidence="1">Belongs to the ATPase B chain family.</text>
</comment>
<organism>
    <name type="scientific">Oenothera biennis</name>
    <name type="common">German evening primrose</name>
    <name type="synonym">Onagra biennis</name>
    <dbReference type="NCBI Taxonomy" id="3942"/>
    <lineage>
        <taxon>Eukaryota</taxon>
        <taxon>Viridiplantae</taxon>
        <taxon>Streptophyta</taxon>
        <taxon>Embryophyta</taxon>
        <taxon>Tracheophyta</taxon>
        <taxon>Spermatophyta</taxon>
        <taxon>Magnoliopsida</taxon>
        <taxon>eudicotyledons</taxon>
        <taxon>Gunneridae</taxon>
        <taxon>Pentapetalae</taxon>
        <taxon>rosids</taxon>
        <taxon>malvids</taxon>
        <taxon>Myrtales</taxon>
        <taxon>Onagraceae</taxon>
        <taxon>Onagroideae</taxon>
        <taxon>Onagreae</taxon>
        <taxon>Oenothera</taxon>
    </lineage>
</organism>
<keyword id="KW-0066">ATP synthesis</keyword>
<keyword id="KW-0138">CF(0)</keyword>
<keyword id="KW-0150">Chloroplast</keyword>
<keyword id="KW-0375">Hydrogen ion transport</keyword>
<keyword id="KW-0406">Ion transport</keyword>
<keyword id="KW-0472">Membrane</keyword>
<keyword id="KW-0934">Plastid</keyword>
<keyword id="KW-0793">Thylakoid</keyword>
<keyword id="KW-0812">Transmembrane</keyword>
<keyword id="KW-1133">Transmembrane helix</keyword>
<keyword id="KW-0813">Transport</keyword>
<protein>
    <recommendedName>
        <fullName evidence="1">ATP synthase subunit b, chloroplastic</fullName>
    </recommendedName>
    <alternativeName>
        <fullName evidence="1">ATP synthase F(0) sector subunit b</fullName>
    </alternativeName>
    <alternativeName>
        <fullName evidence="1">ATPase subunit I</fullName>
    </alternativeName>
</protein>
<sequence length="184" mass="20798">MKNVTDSFVSLVHWPSAGSFGFNTDILATNPINLSVVLGVLIFFGKGVLSDLLDNRKQRILNTIRNSEELREGAIEQLEKARARLQDVQIEAEGYRAYGYFGIDEQRHESINSTYKTLEQLENNKNESIHFEQQRAINQVRQQIFQQALQGALGTLNSCLNNELHLRTISANIGLFGSMKELTD</sequence>
<proteinExistence type="inferred from homology"/>
<name>ATPF_OENBI</name>
<evidence type="ECO:0000255" key="1">
    <source>
        <dbReference type="HAMAP-Rule" id="MF_01398"/>
    </source>
</evidence>
<feature type="chain" id="PRO_0000368960" description="ATP synthase subunit b, chloroplastic">
    <location>
        <begin position="1"/>
        <end position="184"/>
    </location>
</feature>
<feature type="transmembrane region" description="Helical" evidence="1">
    <location>
        <begin position="27"/>
        <end position="49"/>
    </location>
</feature>
<accession>B0Z4W5</accession>